<reference evidence="3" key="1">
    <citation type="journal article" date="1996" name="J. Mol. Biol.">
        <title>Crystal structure of R-phycoerythrin from Polysiphonia urceolata at 2.8 A resolution.</title>
        <authorList>
            <person name="Chang W.-R."/>
            <person name="Jiang T."/>
            <person name="Wan Z.-L."/>
            <person name="Zhang J.-P."/>
            <person name="Yang Z.-X."/>
            <person name="Liang D.-C."/>
        </authorList>
    </citation>
    <scope>X-RAY CRYSTALLOGRAPHY (2.8 ANGSTROMS) IN COMPLEX WITH PHEB AND PHYCOCYANOBILIN</scope>
    <scope>CHROMOPHORE BINDING AT ASN-47; LYS-81; CYS-82; ARG-84; HIS-88; ARG-137; CYS-139 AND ARG-142</scope>
    <scope>SUBUNIT</scope>
</reference>
<sequence length="164" mass="17836">MKSVITTTISAADAAGRYPSTSDLQSVQGNIQRAAARLEAAEKLGSNHEAVVKEAGDACFSKYGYNKNPGEAGENQEKINKCYRDIDHYMRLINYTLVVGGTGPLDEWGIAGAREVYRTLNLPSAAYIAAFVFTRDRLCIPRDMSAQAGVEFCTALDYLINSLS</sequence>
<proteinExistence type="evidence at protein level"/>
<protein>
    <recommendedName>
        <fullName>R-phycoerythrin alpha chain</fullName>
    </recommendedName>
</protein>
<gene>
    <name type="primary">cpeA</name>
    <name type="synonym">rpeA</name>
</gene>
<comment type="function">
    <text evidence="2">Light-harvesting photosynthetic tetrapyrrole chromophore-protein from the phycobiliprotein complex.</text>
</comment>
<comment type="subunit">
    <text evidence="2">Heterododecamer of 6 alpha and 6 beta chains. The basic functional unit of phycobiliproteins is a ring-shaped hexamer formed from two back-to-back trimers contacting via the alpha chain subunits. The trimers are composed of alpha/beta subunit heterodimers arranged around a three-fold axis of symmetry. The phycoerythrins also contain a gamma subunit which is located in the center of the hexamer.</text>
</comment>
<comment type="subcellular location">
    <subcellularLocation>
        <location>Plastid</location>
        <location>Chloroplast thylakoid membrane</location>
        <topology>Peripheral membrane protein</topology>
        <orientation>Stromal side</orientation>
    </subcellularLocation>
    <text>Forms the periphery of the phycobilisome rod.</text>
</comment>
<comment type="PTM">
    <text>Contains two covalently linked phycoerythrobilin chromophores. In PubMed:8876649 the authors refer to the bilins as phycoerythrobilins. In the PDB entries, the bilins are named as phycocyanobilins although the modeled compounds correspond to phycoerythrobilins.</text>
</comment>
<comment type="miscellaneous">
    <text>The light-harvesting antenna system in red algae and cyanobacteria is formed of phycobilisomes. These are composed of the phycobiliproteins phycoerythrin (CPE), phycocyanin (CPC) and allophycocyanin (APC). Cyanobacteria also contain phycoerythrocyanin (PCC). The phycobiliproteins all share the same subunit composition and organization with variations in the covalently bound open-chain tetrapyrrole chromophores. The phycobiliprotein complexes are arranged sequentially in antenna complexes linked by linker proteins with CPE at the periphery, CPC in the middle and APC at the core feeding to the photosynthetic reaction center.</text>
</comment>
<comment type="similarity">
    <text evidence="1">Belongs to the phycobiliprotein family.</text>
</comment>
<organism>
    <name type="scientific">Polysiphonia urceolata</name>
    <name type="common">Red alga</name>
    <name type="synonym">Conferva urceolata</name>
    <dbReference type="NCBI Taxonomy" id="173545"/>
    <lineage>
        <taxon>Eukaryota</taxon>
        <taxon>Rhodophyta</taxon>
        <taxon>Florideophyceae</taxon>
        <taxon>Rhodymeniophycidae</taxon>
        <taxon>Ceramiales</taxon>
        <taxon>Rhodomelaceae</taxon>
        <taxon>Polysiphonioideae</taxon>
        <taxon>Polysiphonia</taxon>
    </lineage>
</organism>
<dbReference type="PDB" id="1LIA">
    <property type="method" value="X-ray"/>
    <property type="resolution" value="2.80 A"/>
    <property type="chains" value="A/K=1-164"/>
</dbReference>
<dbReference type="PDB" id="3MWN">
    <property type="method" value="X-ray"/>
    <property type="resolution" value="2.60 A"/>
    <property type="chains" value="A=32-164"/>
</dbReference>
<dbReference type="PDBsum" id="1LIA"/>
<dbReference type="PDBsum" id="3MWN"/>
<dbReference type="SMR" id="P84861"/>
<dbReference type="EvolutionaryTrace" id="P84861"/>
<dbReference type="GO" id="GO:0009535">
    <property type="term" value="C:chloroplast thylakoid membrane"/>
    <property type="evidence" value="ECO:0007669"/>
    <property type="project" value="UniProtKB-SubCell"/>
</dbReference>
<dbReference type="GO" id="GO:0030089">
    <property type="term" value="C:phycobilisome"/>
    <property type="evidence" value="ECO:0007669"/>
    <property type="project" value="UniProtKB-KW"/>
</dbReference>
<dbReference type="GO" id="GO:0015979">
    <property type="term" value="P:photosynthesis"/>
    <property type="evidence" value="ECO:0007669"/>
    <property type="project" value="UniProtKB-KW"/>
</dbReference>
<dbReference type="CDD" id="cd14769">
    <property type="entry name" value="PE_alpha"/>
    <property type="match status" value="1"/>
</dbReference>
<dbReference type="Gene3D" id="1.10.490.20">
    <property type="entry name" value="Phycocyanins"/>
    <property type="match status" value="1"/>
</dbReference>
<dbReference type="InterPro" id="IPR009050">
    <property type="entry name" value="Globin-like_sf"/>
</dbReference>
<dbReference type="InterPro" id="IPR012128">
    <property type="entry name" value="Phycobilisome_asu/bsu"/>
</dbReference>
<dbReference type="InterPro" id="IPR038719">
    <property type="entry name" value="Phycobilisome_asu/bsu_sf"/>
</dbReference>
<dbReference type="PANTHER" id="PTHR34011:SF4">
    <property type="entry name" value="C-PHYCOCYANIN ALPHA SUBUNIT"/>
    <property type="match status" value="1"/>
</dbReference>
<dbReference type="PANTHER" id="PTHR34011">
    <property type="entry name" value="PHYCOBILISOME 32.1 KDA LINKER POLYPEPTIDE, PHYCOCYANIN-ASSOCIATED, ROD 2-RELATED"/>
    <property type="match status" value="1"/>
</dbReference>
<dbReference type="Pfam" id="PF00502">
    <property type="entry name" value="Phycobilisome"/>
    <property type="match status" value="1"/>
</dbReference>
<dbReference type="PIRSF" id="PIRSF000081">
    <property type="entry name" value="Phycocyanin"/>
    <property type="match status" value="1"/>
</dbReference>
<dbReference type="SUPFAM" id="SSF46458">
    <property type="entry name" value="Globin-like"/>
    <property type="match status" value="1"/>
</dbReference>
<evidence type="ECO:0000255" key="1"/>
<evidence type="ECO:0000269" key="2">
    <source>
    </source>
</evidence>
<evidence type="ECO:0000305" key="3"/>
<evidence type="ECO:0007829" key="4">
    <source>
        <dbReference type="PDB" id="1LIA"/>
    </source>
</evidence>
<name>PHEA_POLUR</name>
<accession>P84861</accession>
<keyword id="KW-0002">3D-structure</keyword>
<keyword id="KW-0042">Antenna complex</keyword>
<keyword id="KW-0089">Bile pigment</keyword>
<keyword id="KW-0150">Chloroplast</keyword>
<keyword id="KW-0157">Chromophore</keyword>
<keyword id="KW-0249">Electron transport</keyword>
<keyword id="KW-0472">Membrane</keyword>
<keyword id="KW-0602">Photosynthesis</keyword>
<keyword id="KW-0605">Phycobilisome</keyword>
<keyword id="KW-0934">Plastid</keyword>
<keyword id="KW-0793">Thylakoid</keyword>
<keyword id="KW-0813">Transport</keyword>
<feature type="chain" id="PRO_0000240598" description="R-phycoerythrin alpha chain">
    <location>
        <begin position="1"/>
        <end position="164"/>
    </location>
</feature>
<feature type="binding site">
    <location>
        <position position="47"/>
    </location>
    <ligand>
        <name>(2R,3E)-phycoerythrobilin</name>
        <dbReference type="ChEBI" id="CHEBI:85276"/>
        <label>2</label>
    </ligand>
</feature>
<feature type="binding site">
    <location>
        <position position="81"/>
    </location>
    <ligand>
        <name>(2R,3E)-phycoerythrobilin</name>
        <dbReference type="ChEBI" id="CHEBI:85276"/>
        <label>1</label>
    </ligand>
</feature>
<feature type="binding site" description="covalent">
    <location>
        <position position="82"/>
    </location>
    <ligand>
        <name>(2R,3E)-phycoerythrobilin</name>
        <dbReference type="ChEBI" id="CHEBI:85276"/>
        <label>1</label>
    </ligand>
</feature>
<feature type="binding site">
    <location>
        <position position="84"/>
    </location>
    <ligand>
        <name>(2R,3E)-phycoerythrobilin</name>
        <dbReference type="ChEBI" id="CHEBI:85276"/>
        <label>1</label>
    </ligand>
</feature>
<feature type="binding site">
    <location>
        <position position="88"/>
    </location>
    <ligand>
        <name>(2R,3E)-phycoerythrobilin</name>
        <dbReference type="ChEBI" id="CHEBI:85276"/>
        <label>1</label>
    </ligand>
</feature>
<feature type="binding site">
    <location>
        <position position="137"/>
    </location>
    <ligand>
        <name>(2R,3E)-phycoerythrobilin</name>
        <dbReference type="ChEBI" id="CHEBI:85276"/>
        <label>2</label>
    </ligand>
</feature>
<feature type="binding site" description="covalent">
    <location>
        <position position="139"/>
    </location>
    <ligand>
        <name>(2R,3E)-phycoerythrobilin</name>
        <dbReference type="ChEBI" id="CHEBI:85276"/>
        <label>2</label>
    </ligand>
</feature>
<feature type="binding site">
    <location>
        <position position="142"/>
    </location>
    <ligand>
        <name>(2R,3E)-phycoerythrobilin</name>
        <dbReference type="ChEBI" id="CHEBI:85276"/>
        <label>2</label>
    </ligand>
</feature>
<feature type="helix" evidence="4">
    <location>
        <begin position="4"/>
        <end position="14"/>
    </location>
</feature>
<feature type="helix" evidence="4">
    <location>
        <begin position="21"/>
        <end position="46"/>
    </location>
</feature>
<feature type="helix" evidence="4">
    <location>
        <begin position="48"/>
        <end position="62"/>
    </location>
</feature>
<feature type="helix" evidence="4">
    <location>
        <begin position="64"/>
        <end position="67"/>
    </location>
</feature>
<feature type="helix" evidence="4">
    <location>
        <begin position="76"/>
        <end position="99"/>
    </location>
</feature>
<feature type="helix" evidence="4">
    <location>
        <begin position="103"/>
        <end position="108"/>
    </location>
</feature>
<feature type="turn" evidence="4">
    <location>
        <begin position="109"/>
        <end position="112"/>
    </location>
</feature>
<feature type="helix" evidence="4">
    <location>
        <begin position="113"/>
        <end position="119"/>
    </location>
</feature>
<feature type="helix" evidence="4">
    <location>
        <begin position="124"/>
        <end position="137"/>
    </location>
</feature>
<feature type="turn" evidence="4">
    <location>
        <begin position="140"/>
        <end position="143"/>
    </location>
</feature>
<feature type="helix" evidence="4">
    <location>
        <begin position="146"/>
        <end position="163"/>
    </location>
</feature>
<geneLocation type="chloroplast" evidence="3"/>